<dbReference type="EC" id="2.7.1.130" evidence="1"/>
<dbReference type="EMBL" id="CP001098">
    <property type="protein sequence ID" value="ACL70642.1"/>
    <property type="molecule type" value="Genomic_DNA"/>
</dbReference>
<dbReference type="SMR" id="B8CZC3"/>
<dbReference type="STRING" id="373903.Hore_18940"/>
<dbReference type="KEGG" id="hor:Hore_18940"/>
<dbReference type="eggNOG" id="COG1663">
    <property type="taxonomic scope" value="Bacteria"/>
</dbReference>
<dbReference type="HOGENOM" id="CLU_038816_6_0_9"/>
<dbReference type="UniPathway" id="UPA00359">
    <property type="reaction ID" value="UER00482"/>
</dbReference>
<dbReference type="Proteomes" id="UP000000719">
    <property type="component" value="Chromosome"/>
</dbReference>
<dbReference type="GO" id="GO:0005886">
    <property type="term" value="C:plasma membrane"/>
    <property type="evidence" value="ECO:0007669"/>
    <property type="project" value="TreeGrafter"/>
</dbReference>
<dbReference type="GO" id="GO:0005524">
    <property type="term" value="F:ATP binding"/>
    <property type="evidence" value="ECO:0007669"/>
    <property type="project" value="UniProtKB-UniRule"/>
</dbReference>
<dbReference type="GO" id="GO:0009029">
    <property type="term" value="F:tetraacyldisaccharide 4'-kinase activity"/>
    <property type="evidence" value="ECO:0007669"/>
    <property type="project" value="UniProtKB-UniRule"/>
</dbReference>
<dbReference type="GO" id="GO:0009245">
    <property type="term" value="P:lipid A biosynthetic process"/>
    <property type="evidence" value="ECO:0007669"/>
    <property type="project" value="UniProtKB-UniRule"/>
</dbReference>
<dbReference type="GO" id="GO:0009244">
    <property type="term" value="P:lipopolysaccharide core region biosynthetic process"/>
    <property type="evidence" value="ECO:0007669"/>
    <property type="project" value="TreeGrafter"/>
</dbReference>
<dbReference type="Gene3D" id="3.40.50.300">
    <property type="entry name" value="P-loop containing nucleotide triphosphate hydrolases"/>
    <property type="match status" value="1"/>
</dbReference>
<dbReference type="HAMAP" id="MF_00409">
    <property type="entry name" value="LpxK"/>
    <property type="match status" value="1"/>
</dbReference>
<dbReference type="InterPro" id="IPR003758">
    <property type="entry name" value="LpxK"/>
</dbReference>
<dbReference type="InterPro" id="IPR027417">
    <property type="entry name" value="P-loop_NTPase"/>
</dbReference>
<dbReference type="NCBIfam" id="TIGR00682">
    <property type="entry name" value="lpxK"/>
    <property type="match status" value="1"/>
</dbReference>
<dbReference type="PANTHER" id="PTHR42724">
    <property type="entry name" value="TETRAACYLDISACCHARIDE 4'-KINASE"/>
    <property type="match status" value="1"/>
</dbReference>
<dbReference type="PANTHER" id="PTHR42724:SF1">
    <property type="entry name" value="TETRAACYLDISACCHARIDE 4'-KINASE, MITOCHONDRIAL-RELATED"/>
    <property type="match status" value="1"/>
</dbReference>
<dbReference type="Pfam" id="PF02606">
    <property type="entry name" value="LpxK"/>
    <property type="match status" value="1"/>
</dbReference>
<dbReference type="SUPFAM" id="SSF52540">
    <property type="entry name" value="P-loop containing nucleoside triphosphate hydrolases"/>
    <property type="match status" value="1"/>
</dbReference>
<feature type="chain" id="PRO_1000134742" description="Tetraacyldisaccharide 4'-kinase">
    <location>
        <begin position="1"/>
        <end position="384"/>
    </location>
</feature>
<feature type="binding site" evidence="1">
    <location>
        <begin position="72"/>
        <end position="79"/>
    </location>
    <ligand>
        <name>ATP</name>
        <dbReference type="ChEBI" id="CHEBI:30616"/>
    </ligand>
</feature>
<protein>
    <recommendedName>
        <fullName evidence="1">Tetraacyldisaccharide 4'-kinase</fullName>
        <ecNumber evidence="1">2.7.1.130</ecNumber>
    </recommendedName>
    <alternativeName>
        <fullName evidence="1">Lipid A 4'-kinase</fullName>
    </alternativeName>
</protein>
<organism>
    <name type="scientific">Halothermothrix orenii (strain H 168 / OCM 544 / DSM 9562)</name>
    <dbReference type="NCBI Taxonomy" id="373903"/>
    <lineage>
        <taxon>Bacteria</taxon>
        <taxon>Bacillati</taxon>
        <taxon>Bacillota</taxon>
        <taxon>Clostridia</taxon>
        <taxon>Halanaerobiales</taxon>
        <taxon>Halothermotrichaceae</taxon>
        <taxon>Halothermothrix</taxon>
    </lineage>
</organism>
<keyword id="KW-0067">ATP-binding</keyword>
<keyword id="KW-0418">Kinase</keyword>
<keyword id="KW-0441">Lipid A biosynthesis</keyword>
<keyword id="KW-0444">Lipid biosynthesis</keyword>
<keyword id="KW-0443">Lipid metabolism</keyword>
<keyword id="KW-0547">Nucleotide-binding</keyword>
<keyword id="KW-1185">Reference proteome</keyword>
<keyword id="KW-0808">Transferase</keyword>
<name>LPXK_HALOH</name>
<reference key="1">
    <citation type="journal article" date="2009" name="PLoS ONE">
        <title>Genome analysis of the anaerobic thermohalophilic bacterium Halothermothrix orenii.</title>
        <authorList>
            <person name="Mavromatis K."/>
            <person name="Ivanova N."/>
            <person name="Anderson I."/>
            <person name="Lykidis A."/>
            <person name="Hooper S.D."/>
            <person name="Sun H."/>
            <person name="Kunin V."/>
            <person name="Lapidus A."/>
            <person name="Hugenholtz P."/>
            <person name="Patel B."/>
            <person name="Kyrpides N.C."/>
        </authorList>
    </citation>
    <scope>NUCLEOTIDE SEQUENCE [LARGE SCALE GENOMIC DNA]</scope>
    <source>
        <strain>H 168 / OCM 544 / DSM 9562</strain>
    </source>
</reference>
<comment type="function">
    <text evidence="1">Transfers the gamma-phosphate of ATP to the 4'-position of a tetraacyldisaccharide 1-phosphate intermediate (termed DS-1-P) to form tetraacyldisaccharide 1,4'-bis-phosphate (lipid IVA).</text>
</comment>
<comment type="catalytic activity">
    <reaction evidence="1">
        <text>a lipid A disaccharide + ATP = a lipid IVA + ADP + H(+)</text>
        <dbReference type="Rhea" id="RHEA:67840"/>
        <dbReference type="ChEBI" id="CHEBI:15378"/>
        <dbReference type="ChEBI" id="CHEBI:30616"/>
        <dbReference type="ChEBI" id="CHEBI:176343"/>
        <dbReference type="ChEBI" id="CHEBI:176425"/>
        <dbReference type="ChEBI" id="CHEBI:456216"/>
        <dbReference type="EC" id="2.7.1.130"/>
    </reaction>
</comment>
<comment type="pathway">
    <text evidence="1">Glycolipid biosynthesis; lipid IV(A) biosynthesis; lipid IV(A) from (3R)-3-hydroxytetradecanoyl-[acyl-carrier-protein] and UDP-N-acetyl-alpha-D-glucosamine: step 6/6.</text>
</comment>
<comment type="similarity">
    <text evidence="1">Belongs to the LpxK family.</text>
</comment>
<gene>
    <name evidence="1" type="primary">lpxK</name>
    <name type="ordered locus">Hore_18940</name>
</gene>
<evidence type="ECO:0000255" key="1">
    <source>
        <dbReference type="HAMAP-Rule" id="MF_00409"/>
    </source>
</evidence>
<accession>B8CZC3</accession>
<sequence>MVANMRKKLESYLINLIKSGPRSICDKIVLFILSILEKIYNLLILLRRLLYNLNLVKPGEVEARVISVGNITAGGTGKTPLVIYLAKKLAEENRVVVISRGYQSQSEGEEPSVVSDGRNILTDVSEAGDEVYMMATLLGGVPLITGSNRYKAARLASRRFNAEIIILDDGFQHWQLKRDVDIVMIDGLKPFGQGRLIPRGFLREPLSGLKRADFFVISRAHHISREKLQEIKDTLCQYNQNAVVYEATTSSVYLKELSVASLEMKSIIHKKRPLDELKGAKVIAVCGLGNPRSFYRDLEISGAEVIETLSFNDHHQYRPDDFDKIINLARQKAIDIVITTEKDAVKFSRDDIKKFIDHNINLYVLGIEISLKGTVDLAQVINKY</sequence>
<proteinExistence type="inferred from homology"/>